<protein>
    <recommendedName>
        <fullName evidence="1">ATP synthase subunit alpha</fullName>
        <ecNumber evidence="1">7.1.2.2</ecNumber>
    </recommendedName>
    <alternativeName>
        <fullName evidence="1">ATP synthase F1 sector subunit alpha</fullName>
    </alternativeName>
    <alternativeName>
        <fullName evidence="1">F-ATPase subunit alpha</fullName>
    </alternativeName>
</protein>
<reference key="1">
    <citation type="journal article" date="2006" name="Proc. Natl. Acad. Sci. U.S.A.">
        <title>Evolution of sensory complexity recorded in a myxobacterial genome.</title>
        <authorList>
            <person name="Goldman B.S."/>
            <person name="Nierman W.C."/>
            <person name="Kaiser D."/>
            <person name="Slater S.C."/>
            <person name="Durkin A.S."/>
            <person name="Eisen J.A."/>
            <person name="Ronning C.M."/>
            <person name="Barbazuk W.B."/>
            <person name="Blanchard M."/>
            <person name="Field C."/>
            <person name="Halling C."/>
            <person name="Hinkle G."/>
            <person name="Iartchuk O."/>
            <person name="Kim H.S."/>
            <person name="Mackenzie C."/>
            <person name="Madupu R."/>
            <person name="Miller N."/>
            <person name="Shvartsbeyn A."/>
            <person name="Sullivan S.A."/>
            <person name="Vaudin M."/>
            <person name="Wiegand R."/>
            <person name="Kaplan H.B."/>
        </authorList>
    </citation>
    <scope>NUCLEOTIDE SEQUENCE [LARGE SCALE GENOMIC DNA]</scope>
    <source>
        <strain>DK1622</strain>
    </source>
</reference>
<organism>
    <name type="scientific">Myxococcus xanthus (strain DK1622)</name>
    <dbReference type="NCBI Taxonomy" id="246197"/>
    <lineage>
        <taxon>Bacteria</taxon>
        <taxon>Pseudomonadati</taxon>
        <taxon>Myxococcota</taxon>
        <taxon>Myxococcia</taxon>
        <taxon>Myxococcales</taxon>
        <taxon>Cystobacterineae</taxon>
        <taxon>Myxococcaceae</taxon>
        <taxon>Myxococcus</taxon>
    </lineage>
</organism>
<comment type="function">
    <text evidence="1">Produces ATP from ADP in the presence of a proton gradient across the membrane. The alpha chain is a regulatory subunit.</text>
</comment>
<comment type="catalytic activity">
    <reaction evidence="1">
        <text>ATP + H2O + 4 H(+)(in) = ADP + phosphate + 5 H(+)(out)</text>
        <dbReference type="Rhea" id="RHEA:57720"/>
        <dbReference type="ChEBI" id="CHEBI:15377"/>
        <dbReference type="ChEBI" id="CHEBI:15378"/>
        <dbReference type="ChEBI" id="CHEBI:30616"/>
        <dbReference type="ChEBI" id="CHEBI:43474"/>
        <dbReference type="ChEBI" id="CHEBI:456216"/>
        <dbReference type="EC" id="7.1.2.2"/>
    </reaction>
</comment>
<comment type="subunit">
    <text evidence="1">F-type ATPases have 2 components, CF(1) - the catalytic core - and CF(0) - the membrane proton channel. CF(1) has five subunits: alpha(3), beta(3), gamma(1), delta(1), epsilon(1). CF(0) has three main subunits: a(1), b(2) and c(9-12). The alpha and beta chains form an alternating ring which encloses part of the gamma chain. CF(1) is attached to CF(0) by a central stalk formed by the gamma and epsilon chains, while a peripheral stalk is formed by the delta and b chains.</text>
</comment>
<comment type="subcellular location">
    <subcellularLocation>
        <location evidence="1">Cell inner membrane</location>
        <topology evidence="1">Peripheral membrane protein</topology>
    </subcellularLocation>
</comment>
<comment type="similarity">
    <text evidence="1">Belongs to the ATPase alpha/beta chains family.</text>
</comment>
<comment type="sequence caution" evidence="2">
    <conflict type="erroneous initiation">
        <sequence resource="EMBL-CDS" id="ABF91104"/>
    </conflict>
</comment>
<keyword id="KW-0066">ATP synthesis</keyword>
<keyword id="KW-0067">ATP-binding</keyword>
<keyword id="KW-0997">Cell inner membrane</keyword>
<keyword id="KW-1003">Cell membrane</keyword>
<keyword id="KW-0139">CF(1)</keyword>
<keyword id="KW-0375">Hydrogen ion transport</keyword>
<keyword id="KW-0406">Ion transport</keyword>
<keyword id="KW-0472">Membrane</keyword>
<keyword id="KW-0547">Nucleotide-binding</keyword>
<keyword id="KW-1185">Reference proteome</keyword>
<keyword id="KW-1278">Translocase</keyword>
<keyword id="KW-0813">Transport</keyword>
<name>ATPA_MYXXD</name>
<dbReference type="EC" id="7.1.2.2" evidence="1"/>
<dbReference type="EMBL" id="CP000113">
    <property type="protein sequence ID" value="ABF91104.1"/>
    <property type="status" value="ALT_INIT"/>
    <property type="molecule type" value="Genomic_DNA"/>
</dbReference>
<dbReference type="RefSeq" id="WP_026114085.1">
    <property type="nucleotide sequence ID" value="NC_008095.1"/>
</dbReference>
<dbReference type="SMR" id="Q1CWT2"/>
<dbReference type="STRING" id="246197.MXAN_7028"/>
<dbReference type="EnsemblBacteria" id="ABF91104">
    <property type="protein sequence ID" value="ABF91104"/>
    <property type="gene ID" value="MXAN_7028"/>
</dbReference>
<dbReference type="GeneID" id="41364204"/>
<dbReference type="KEGG" id="mxa:MXAN_7028"/>
<dbReference type="eggNOG" id="COG0056">
    <property type="taxonomic scope" value="Bacteria"/>
</dbReference>
<dbReference type="HOGENOM" id="CLU_010091_2_1_7"/>
<dbReference type="OrthoDB" id="9803053at2"/>
<dbReference type="Proteomes" id="UP000002402">
    <property type="component" value="Chromosome"/>
</dbReference>
<dbReference type="GO" id="GO:0005886">
    <property type="term" value="C:plasma membrane"/>
    <property type="evidence" value="ECO:0007669"/>
    <property type="project" value="UniProtKB-SubCell"/>
</dbReference>
<dbReference type="GO" id="GO:0045259">
    <property type="term" value="C:proton-transporting ATP synthase complex"/>
    <property type="evidence" value="ECO:0007669"/>
    <property type="project" value="UniProtKB-KW"/>
</dbReference>
<dbReference type="GO" id="GO:0043531">
    <property type="term" value="F:ADP binding"/>
    <property type="evidence" value="ECO:0007669"/>
    <property type="project" value="TreeGrafter"/>
</dbReference>
<dbReference type="GO" id="GO:0005524">
    <property type="term" value="F:ATP binding"/>
    <property type="evidence" value="ECO:0007669"/>
    <property type="project" value="UniProtKB-UniRule"/>
</dbReference>
<dbReference type="GO" id="GO:0046933">
    <property type="term" value="F:proton-transporting ATP synthase activity, rotational mechanism"/>
    <property type="evidence" value="ECO:0007669"/>
    <property type="project" value="UniProtKB-UniRule"/>
</dbReference>
<dbReference type="CDD" id="cd18113">
    <property type="entry name" value="ATP-synt_F1_alpha_C"/>
    <property type="match status" value="1"/>
</dbReference>
<dbReference type="CDD" id="cd18116">
    <property type="entry name" value="ATP-synt_F1_alpha_N"/>
    <property type="match status" value="1"/>
</dbReference>
<dbReference type="CDD" id="cd01132">
    <property type="entry name" value="F1-ATPase_alpha_CD"/>
    <property type="match status" value="1"/>
</dbReference>
<dbReference type="FunFam" id="1.20.150.20:FF:000001">
    <property type="entry name" value="ATP synthase subunit alpha"/>
    <property type="match status" value="1"/>
</dbReference>
<dbReference type="FunFam" id="2.40.30.20:FF:000001">
    <property type="entry name" value="ATP synthase subunit alpha"/>
    <property type="match status" value="1"/>
</dbReference>
<dbReference type="FunFam" id="3.40.50.300:FF:000002">
    <property type="entry name" value="ATP synthase subunit alpha"/>
    <property type="match status" value="1"/>
</dbReference>
<dbReference type="Gene3D" id="2.40.30.20">
    <property type="match status" value="1"/>
</dbReference>
<dbReference type="Gene3D" id="1.20.150.20">
    <property type="entry name" value="ATP synthase alpha/beta chain, C-terminal domain"/>
    <property type="match status" value="1"/>
</dbReference>
<dbReference type="Gene3D" id="3.40.50.300">
    <property type="entry name" value="P-loop containing nucleotide triphosphate hydrolases"/>
    <property type="match status" value="1"/>
</dbReference>
<dbReference type="HAMAP" id="MF_01346">
    <property type="entry name" value="ATP_synth_alpha_bact"/>
    <property type="match status" value="1"/>
</dbReference>
<dbReference type="InterPro" id="IPR023366">
    <property type="entry name" value="ATP_synth_asu-like_sf"/>
</dbReference>
<dbReference type="InterPro" id="IPR000793">
    <property type="entry name" value="ATP_synth_asu_C"/>
</dbReference>
<dbReference type="InterPro" id="IPR038376">
    <property type="entry name" value="ATP_synth_asu_C_sf"/>
</dbReference>
<dbReference type="InterPro" id="IPR033732">
    <property type="entry name" value="ATP_synth_F1_a_nt-bd_dom"/>
</dbReference>
<dbReference type="InterPro" id="IPR005294">
    <property type="entry name" value="ATP_synth_F1_asu"/>
</dbReference>
<dbReference type="InterPro" id="IPR020003">
    <property type="entry name" value="ATPase_a/bsu_AS"/>
</dbReference>
<dbReference type="InterPro" id="IPR004100">
    <property type="entry name" value="ATPase_F1/V1/A1_a/bsu_N"/>
</dbReference>
<dbReference type="InterPro" id="IPR036121">
    <property type="entry name" value="ATPase_F1/V1/A1_a/bsu_N_sf"/>
</dbReference>
<dbReference type="InterPro" id="IPR000194">
    <property type="entry name" value="ATPase_F1/V1/A1_a/bsu_nucl-bd"/>
</dbReference>
<dbReference type="InterPro" id="IPR027417">
    <property type="entry name" value="P-loop_NTPase"/>
</dbReference>
<dbReference type="NCBIfam" id="TIGR00962">
    <property type="entry name" value="atpA"/>
    <property type="match status" value="1"/>
</dbReference>
<dbReference type="NCBIfam" id="NF009884">
    <property type="entry name" value="PRK13343.1"/>
    <property type="match status" value="1"/>
</dbReference>
<dbReference type="PANTHER" id="PTHR48082">
    <property type="entry name" value="ATP SYNTHASE SUBUNIT ALPHA, MITOCHONDRIAL"/>
    <property type="match status" value="1"/>
</dbReference>
<dbReference type="PANTHER" id="PTHR48082:SF2">
    <property type="entry name" value="ATP SYNTHASE SUBUNIT ALPHA, MITOCHONDRIAL"/>
    <property type="match status" value="1"/>
</dbReference>
<dbReference type="Pfam" id="PF00006">
    <property type="entry name" value="ATP-synt_ab"/>
    <property type="match status" value="1"/>
</dbReference>
<dbReference type="Pfam" id="PF00306">
    <property type="entry name" value="ATP-synt_ab_C"/>
    <property type="match status" value="1"/>
</dbReference>
<dbReference type="Pfam" id="PF02874">
    <property type="entry name" value="ATP-synt_ab_N"/>
    <property type="match status" value="1"/>
</dbReference>
<dbReference type="PIRSF" id="PIRSF039088">
    <property type="entry name" value="F_ATPase_subunit_alpha"/>
    <property type="match status" value="1"/>
</dbReference>
<dbReference type="SUPFAM" id="SSF47917">
    <property type="entry name" value="C-terminal domain of alpha and beta subunits of F1 ATP synthase"/>
    <property type="match status" value="1"/>
</dbReference>
<dbReference type="SUPFAM" id="SSF50615">
    <property type="entry name" value="N-terminal domain of alpha and beta subunits of F1 ATP synthase"/>
    <property type="match status" value="1"/>
</dbReference>
<dbReference type="SUPFAM" id="SSF52540">
    <property type="entry name" value="P-loop containing nucleoside triphosphate hydrolases"/>
    <property type="match status" value="1"/>
</dbReference>
<dbReference type="PROSITE" id="PS00152">
    <property type="entry name" value="ATPASE_ALPHA_BETA"/>
    <property type="match status" value="1"/>
</dbReference>
<gene>
    <name evidence="1" type="primary">atpA</name>
    <name type="ordered locus">MXAN_7028</name>
</gene>
<proteinExistence type="inferred from homology"/>
<feature type="chain" id="PRO_0000256098" description="ATP synthase subunit alpha">
    <location>
        <begin position="1"/>
        <end position="515"/>
    </location>
</feature>
<feature type="binding site" evidence="1">
    <location>
        <begin position="169"/>
        <end position="176"/>
    </location>
    <ligand>
        <name>ATP</name>
        <dbReference type="ChEBI" id="CHEBI:30616"/>
    </ligand>
</feature>
<feature type="site" description="Required for activity" evidence="1">
    <location>
        <position position="362"/>
    </location>
</feature>
<sequence length="515" mass="56104">MEIRADEISRIIREQIKDYGKKVTVAETGTVLSVGDGIARIYGLEGALAGELVEFANGVQGLVLNLEEDNVGVAIMGDFQAIREGDTVKRTQQIASVPVGKELLGRVVDPLGKPLDGKGPIAATETRRLEVKAPGIVSRKSVHEPLQTGIKALDALVPVGRGQRELIIGDRQTGKTAVAIDTIINQKGLNVYCIYVAIGQKQSTVAQVVEKLNRYGAMEYTTVVASNASDPAPMQFFAPYAGVAMGEYFRDNKMHALIVYDDLSKQAVAYRQLSLLLRRPPGREAYPGDVFYVHSRLLERAAKLSDEEGAGSLTALPIIETQAGDVSAYIPTNVISITDGQIFLETDLFFAGVRPAINVGLSVSRVGSAAQIKAMKQVAGTMKLELAQYRELAAFAQFGSDLDKATQETLARGARMVELLKQGQYEPMPVEKQVMQIYAATNRDDPKKRGWIRDIPTADVVRWMREFLEFADGKHPNVAKDLASKRELTADIKTALSKAITEFNEVFQPTPGAKV</sequence>
<evidence type="ECO:0000255" key="1">
    <source>
        <dbReference type="HAMAP-Rule" id="MF_01346"/>
    </source>
</evidence>
<evidence type="ECO:0000305" key="2"/>
<accession>Q1CWT2</accession>